<comment type="function">
    <text evidence="1">Specifically methylates the pseudouridine at position 1915 (m3Psi1915) in 23S rRNA.</text>
</comment>
<comment type="catalytic activity">
    <reaction evidence="1">
        <text>pseudouridine(1915) in 23S rRNA + S-adenosyl-L-methionine = N(3)-methylpseudouridine(1915) in 23S rRNA + S-adenosyl-L-homocysteine + H(+)</text>
        <dbReference type="Rhea" id="RHEA:42752"/>
        <dbReference type="Rhea" id="RHEA-COMP:10221"/>
        <dbReference type="Rhea" id="RHEA-COMP:10222"/>
        <dbReference type="ChEBI" id="CHEBI:15378"/>
        <dbReference type="ChEBI" id="CHEBI:57856"/>
        <dbReference type="ChEBI" id="CHEBI:59789"/>
        <dbReference type="ChEBI" id="CHEBI:65314"/>
        <dbReference type="ChEBI" id="CHEBI:74486"/>
        <dbReference type="EC" id="2.1.1.177"/>
    </reaction>
</comment>
<comment type="subunit">
    <text evidence="1">Homodimer.</text>
</comment>
<comment type="subcellular location">
    <subcellularLocation>
        <location evidence="1">Cytoplasm</location>
    </subcellularLocation>
</comment>
<comment type="similarity">
    <text evidence="1">Belongs to the RNA methyltransferase RlmH family.</text>
</comment>
<protein>
    <recommendedName>
        <fullName evidence="1">Ribosomal RNA large subunit methyltransferase H</fullName>
        <ecNumber evidence="1">2.1.1.177</ecNumber>
    </recommendedName>
    <alternativeName>
        <fullName evidence="1">23S rRNA (pseudouridine1915-N3)-methyltransferase</fullName>
    </alternativeName>
    <alternativeName>
        <fullName evidence="1">23S rRNA m3Psi1915 methyltransferase</fullName>
    </alternativeName>
    <alternativeName>
        <fullName evidence="1">rRNA (pseudouridine-N3-)-methyltransferase RlmH</fullName>
    </alternativeName>
</protein>
<sequence>MKSLRLLAVGKLKTPFWQQAAAHYLERLRHTWRVTETLVRDGDAALPPAKRNADEGARLLAALGPADIVVCMDERGKAYTSREFAALLDRLTENATAVPCFVIGGAYGLDDAVLKRATLRVCLGPMTFPHEMARVVLLEQLYRADCILRRSPYHH</sequence>
<evidence type="ECO:0000255" key="1">
    <source>
        <dbReference type="HAMAP-Rule" id="MF_00658"/>
    </source>
</evidence>
<organism>
    <name type="scientific">Nitratidesulfovibrio vulgaris (strain DSM 19637 / Miyazaki F)</name>
    <name type="common">Desulfovibrio vulgaris</name>
    <dbReference type="NCBI Taxonomy" id="883"/>
    <lineage>
        <taxon>Bacteria</taxon>
        <taxon>Pseudomonadati</taxon>
        <taxon>Thermodesulfobacteriota</taxon>
        <taxon>Desulfovibrionia</taxon>
        <taxon>Desulfovibrionales</taxon>
        <taxon>Desulfovibrionaceae</taxon>
        <taxon>Nitratidesulfovibrio</taxon>
    </lineage>
</organism>
<accession>B8DNW9</accession>
<proteinExistence type="inferred from homology"/>
<feature type="chain" id="PRO_1000131227" description="Ribosomal RNA large subunit methyltransferase H">
    <location>
        <begin position="1"/>
        <end position="155"/>
    </location>
</feature>
<feature type="binding site" evidence="1">
    <location>
        <position position="104"/>
    </location>
    <ligand>
        <name>S-adenosyl-L-methionine</name>
        <dbReference type="ChEBI" id="CHEBI:59789"/>
    </ligand>
</feature>
<feature type="binding site" evidence="1">
    <location>
        <begin position="123"/>
        <end position="128"/>
    </location>
    <ligand>
        <name>S-adenosyl-L-methionine</name>
        <dbReference type="ChEBI" id="CHEBI:59789"/>
    </ligand>
</feature>
<gene>
    <name evidence="1" type="primary">rlmH</name>
    <name type="ordered locus">DvMF_0845</name>
</gene>
<reference key="1">
    <citation type="submission" date="2008-10" db="EMBL/GenBank/DDBJ databases">
        <title>Complete sequence of Desulfovibrio vulgaris str. 'Miyazaki F'.</title>
        <authorList>
            <person name="Lucas S."/>
            <person name="Copeland A."/>
            <person name="Lapidus A."/>
            <person name="Glavina del Rio T."/>
            <person name="Dalin E."/>
            <person name="Tice H."/>
            <person name="Bruce D."/>
            <person name="Goodwin L."/>
            <person name="Pitluck S."/>
            <person name="Sims D."/>
            <person name="Brettin T."/>
            <person name="Detter J.C."/>
            <person name="Han C."/>
            <person name="Larimer F."/>
            <person name="Land M."/>
            <person name="Hauser L."/>
            <person name="Kyrpides N."/>
            <person name="Mikhailova N."/>
            <person name="Hazen T.C."/>
            <person name="Richardson P."/>
        </authorList>
    </citation>
    <scope>NUCLEOTIDE SEQUENCE [LARGE SCALE GENOMIC DNA]</scope>
    <source>
        <strain>DSM 19637 / Miyazaki F</strain>
    </source>
</reference>
<name>RLMH_NITV9</name>
<dbReference type="EC" id="2.1.1.177" evidence="1"/>
<dbReference type="EMBL" id="CP001197">
    <property type="protein sequence ID" value="ACL07801.1"/>
    <property type="molecule type" value="Genomic_DNA"/>
</dbReference>
<dbReference type="SMR" id="B8DNW9"/>
<dbReference type="STRING" id="883.DvMF_0845"/>
<dbReference type="KEGG" id="dvm:DvMF_0845"/>
<dbReference type="eggNOG" id="COG1576">
    <property type="taxonomic scope" value="Bacteria"/>
</dbReference>
<dbReference type="HOGENOM" id="CLU_100552_1_0_7"/>
<dbReference type="OrthoDB" id="9806643at2"/>
<dbReference type="GO" id="GO:0005737">
    <property type="term" value="C:cytoplasm"/>
    <property type="evidence" value="ECO:0007669"/>
    <property type="project" value="UniProtKB-SubCell"/>
</dbReference>
<dbReference type="GO" id="GO:0070038">
    <property type="term" value="F:rRNA (pseudouridine-N3-)-methyltransferase activity"/>
    <property type="evidence" value="ECO:0007669"/>
    <property type="project" value="UniProtKB-UniRule"/>
</dbReference>
<dbReference type="CDD" id="cd18081">
    <property type="entry name" value="RlmH-like"/>
    <property type="match status" value="1"/>
</dbReference>
<dbReference type="Gene3D" id="3.40.1280.10">
    <property type="match status" value="1"/>
</dbReference>
<dbReference type="HAMAP" id="MF_00658">
    <property type="entry name" value="23SrRNA_methyltr_H"/>
    <property type="match status" value="1"/>
</dbReference>
<dbReference type="InterPro" id="IPR029028">
    <property type="entry name" value="Alpha/beta_knot_MTases"/>
</dbReference>
<dbReference type="InterPro" id="IPR003742">
    <property type="entry name" value="RlmH-like"/>
</dbReference>
<dbReference type="InterPro" id="IPR029026">
    <property type="entry name" value="tRNA_m1G_MTases_N"/>
</dbReference>
<dbReference type="PANTHER" id="PTHR33603">
    <property type="entry name" value="METHYLTRANSFERASE"/>
    <property type="match status" value="1"/>
</dbReference>
<dbReference type="PANTHER" id="PTHR33603:SF1">
    <property type="entry name" value="RIBOSOMAL RNA LARGE SUBUNIT METHYLTRANSFERASE H"/>
    <property type="match status" value="1"/>
</dbReference>
<dbReference type="Pfam" id="PF02590">
    <property type="entry name" value="SPOUT_MTase"/>
    <property type="match status" value="1"/>
</dbReference>
<dbReference type="PIRSF" id="PIRSF004505">
    <property type="entry name" value="MT_bac"/>
    <property type="match status" value="1"/>
</dbReference>
<dbReference type="SUPFAM" id="SSF75217">
    <property type="entry name" value="alpha/beta knot"/>
    <property type="match status" value="1"/>
</dbReference>
<keyword id="KW-0963">Cytoplasm</keyword>
<keyword id="KW-0489">Methyltransferase</keyword>
<keyword id="KW-0698">rRNA processing</keyword>
<keyword id="KW-0949">S-adenosyl-L-methionine</keyword>
<keyword id="KW-0808">Transferase</keyword>